<proteinExistence type="inferred from homology"/>
<sequence>MSGPVDTAKSITKKRKRKHGGGARAATETDDATTQPVVENGAVTDSPEKGEDTKKSEKNGKDKSTKKRKVSHASSDEENESEGEQGAPSQADGDSDNNGDDGDDNSEAENGDNGDKKDAESTDLPSADALRLPTVEGEPQKFTELGLTEKTLKAINDMGFDTMTEIQRRTIPPLLAGRDVLGAAKTGSGKTLSFLIPAVEMLSALRFKPRNGTGVIVVSPTRELALQIFGVARELCQYHSQTYGIVIGGANRRAEAEKLMKGVNLLIATPGRLLDHLQNTQGFIFKNLKTLVIDEADRILEVGFEDEMRQIVKILPSEERQTMLFSATQTTKVEDLARISLRPGPLYINVDHRKEHSTVEGLEQGYVICEADKRFLLLFSFLKRNLKKKIIVFFSSCNCVKYHAELLNYIDLPVLELHGKQKQQKRTNTFFEFCNAKQGTLICTDVAARGLDIPAVDWIIQFDPPDDPRDYIHRVGRTARGANAKGRSLMFLQPSEVGFLKHLKEARVPVVEFEFPANKIVNVQSQLEKLIGQNYYLNKSAKEGYRSYLQAYASHSLRSVFDVHKLDLVKVAKGFGFSTPPRIDIQLGASLSRDKKQQQQGRRNYGSQPHSKGLKFKRKHDD</sequence>
<name>HAS1_NEOFI</name>
<evidence type="ECO:0000250" key="1"/>
<evidence type="ECO:0000255" key="2">
    <source>
        <dbReference type="PROSITE-ProRule" id="PRU00541"/>
    </source>
</evidence>
<evidence type="ECO:0000255" key="3">
    <source>
        <dbReference type="PROSITE-ProRule" id="PRU00542"/>
    </source>
</evidence>
<evidence type="ECO:0000256" key="4">
    <source>
        <dbReference type="SAM" id="MobiDB-lite"/>
    </source>
</evidence>
<evidence type="ECO:0000305" key="5"/>
<feature type="chain" id="PRO_0000282471" description="ATP-dependent RNA helicase has1">
    <location>
        <begin position="1"/>
        <end position="622"/>
    </location>
</feature>
<feature type="domain" description="Helicase ATP-binding" evidence="2">
    <location>
        <begin position="171"/>
        <end position="347"/>
    </location>
</feature>
<feature type="domain" description="Helicase C-terminal" evidence="3">
    <location>
        <begin position="361"/>
        <end position="531"/>
    </location>
</feature>
<feature type="region of interest" description="Disordered" evidence="4">
    <location>
        <begin position="1"/>
        <end position="137"/>
    </location>
</feature>
<feature type="region of interest" description="Disordered" evidence="4">
    <location>
        <begin position="588"/>
        <end position="622"/>
    </location>
</feature>
<feature type="short sequence motif" description="Q motif">
    <location>
        <begin position="140"/>
        <end position="168"/>
    </location>
</feature>
<feature type="short sequence motif" description="DEAD box">
    <location>
        <begin position="294"/>
        <end position="297"/>
    </location>
</feature>
<feature type="compositionally biased region" description="Basic residues" evidence="4">
    <location>
        <begin position="11"/>
        <end position="21"/>
    </location>
</feature>
<feature type="compositionally biased region" description="Basic and acidic residues" evidence="4">
    <location>
        <begin position="46"/>
        <end position="63"/>
    </location>
</feature>
<feature type="compositionally biased region" description="Acidic residues" evidence="4">
    <location>
        <begin position="93"/>
        <end position="112"/>
    </location>
</feature>
<feature type="compositionally biased region" description="Polar residues" evidence="4">
    <location>
        <begin position="598"/>
        <end position="610"/>
    </location>
</feature>
<feature type="compositionally biased region" description="Basic residues" evidence="4">
    <location>
        <begin position="612"/>
        <end position="622"/>
    </location>
</feature>
<feature type="binding site" evidence="2">
    <location>
        <begin position="184"/>
        <end position="191"/>
    </location>
    <ligand>
        <name>ATP</name>
        <dbReference type="ChEBI" id="CHEBI:30616"/>
    </ligand>
</feature>
<dbReference type="EC" id="3.6.4.13"/>
<dbReference type="EMBL" id="DS027685">
    <property type="protein sequence ID" value="EAW24816.1"/>
    <property type="molecule type" value="Genomic_DNA"/>
</dbReference>
<dbReference type="RefSeq" id="XP_001266713.1">
    <property type="nucleotide sequence ID" value="XM_001266712.1"/>
</dbReference>
<dbReference type="SMR" id="A1CW14"/>
<dbReference type="STRING" id="331117.A1CW14"/>
<dbReference type="EnsemblFungi" id="EAW24816">
    <property type="protein sequence ID" value="EAW24816"/>
    <property type="gene ID" value="NFIA_103010"/>
</dbReference>
<dbReference type="GeneID" id="4593776"/>
<dbReference type="KEGG" id="nfi:NFIA_103010"/>
<dbReference type="VEuPathDB" id="FungiDB:NFIA_103010"/>
<dbReference type="eggNOG" id="KOG0342">
    <property type="taxonomic scope" value="Eukaryota"/>
</dbReference>
<dbReference type="HOGENOM" id="CLU_003041_26_5_1"/>
<dbReference type="OMA" id="LMEFHSQ"/>
<dbReference type="OrthoDB" id="10259640at2759"/>
<dbReference type="Proteomes" id="UP000006702">
    <property type="component" value="Unassembled WGS sequence"/>
</dbReference>
<dbReference type="GO" id="GO:0005635">
    <property type="term" value="C:nuclear envelope"/>
    <property type="evidence" value="ECO:0007669"/>
    <property type="project" value="EnsemblFungi"/>
</dbReference>
<dbReference type="GO" id="GO:0005730">
    <property type="term" value="C:nucleolus"/>
    <property type="evidence" value="ECO:0007669"/>
    <property type="project" value="UniProtKB-SubCell"/>
</dbReference>
<dbReference type="GO" id="GO:0030687">
    <property type="term" value="C:preribosome, large subunit precursor"/>
    <property type="evidence" value="ECO:0007669"/>
    <property type="project" value="EnsemblFungi"/>
</dbReference>
<dbReference type="GO" id="GO:0032040">
    <property type="term" value="C:small-subunit processome"/>
    <property type="evidence" value="ECO:0007669"/>
    <property type="project" value="EnsemblFungi"/>
</dbReference>
<dbReference type="GO" id="GO:0005524">
    <property type="term" value="F:ATP binding"/>
    <property type="evidence" value="ECO:0007669"/>
    <property type="project" value="UniProtKB-KW"/>
</dbReference>
<dbReference type="GO" id="GO:0016887">
    <property type="term" value="F:ATP hydrolysis activity"/>
    <property type="evidence" value="ECO:0007669"/>
    <property type="project" value="RHEA"/>
</dbReference>
<dbReference type="GO" id="GO:0042802">
    <property type="term" value="F:identical protein binding"/>
    <property type="evidence" value="ECO:0007669"/>
    <property type="project" value="EnsemblFungi"/>
</dbReference>
<dbReference type="GO" id="GO:0003723">
    <property type="term" value="F:RNA binding"/>
    <property type="evidence" value="ECO:0007669"/>
    <property type="project" value="UniProtKB-KW"/>
</dbReference>
<dbReference type="GO" id="GO:0003724">
    <property type="term" value="F:RNA helicase activity"/>
    <property type="evidence" value="ECO:0007669"/>
    <property type="project" value="UniProtKB-EC"/>
</dbReference>
<dbReference type="GO" id="GO:0000463">
    <property type="term" value="P:maturation of LSU-rRNA from tricistronic rRNA transcript (SSU-rRNA, 5.8S rRNA, LSU-rRNA)"/>
    <property type="evidence" value="ECO:0007669"/>
    <property type="project" value="EnsemblFungi"/>
</dbReference>
<dbReference type="GO" id="GO:0000462">
    <property type="term" value="P:maturation of SSU-rRNA from tricistronic rRNA transcript (SSU-rRNA, 5.8S rRNA, LSU-rRNA)"/>
    <property type="evidence" value="ECO:0007669"/>
    <property type="project" value="EnsemblFungi"/>
</dbReference>
<dbReference type="GO" id="GO:1990417">
    <property type="term" value="P:snoRNA release from pre-rRNA"/>
    <property type="evidence" value="ECO:0007669"/>
    <property type="project" value="EnsemblFungi"/>
</dbReference>
<dbReference type="CDD" id="cd17942">
    <property type="entry name" value="DEADc_DDX18"/>
    <property type="match status" value="1"/>
</dbReference>
<dbReference type="CDD" id="cd18787">
    <property type="entry name" value="SF2_C_DEAD"/>
    <property type="match status" value="1"/>
</dbReference>
<dbReference type="FunFam" id="3.40.50.300:FF:000379">
    <property type="entry name" value="RNA helicase"/>
    <property type="match status" value="1"/>
</dbReference>
<dbReference type="FunFam" id="3.40.50.300:FF:000460">
    <property type="entry name" value="RNA helicase"/>
    <property type="match status" value="1"/>
</dbReference>
<dbReference type="Gene3D" id="3.40.50.300">
    <property type="entry name" value="P-loop containing nucleotide triphosphate hydrolases"/>
    <property type="match status" value="2"/>
</dbReference>
<dbReference type="InterPro" id="IPR044773">
    <property type="entry name" value="DDX18/Has1_DEADc"/>
</dbReference>
<dbReference type="InterPro" id="IPR011545">
    <property type="entry name" value="DEAD/DEAH_box_helicase_dom"/>
</dbReference>
<dbReference type="InterPro" id="IPR014001">
    <property type="entry name" value="Helicase_ATP-bd"/>
</dbReference>
<dbReference type="InterPro" id="IPR001650">
    <property type="entry name" value="Helicase_C-like"/>
</dbReference>
<dbReference type="InterPro" id="IPR027417">
    <property type="entry name" value="P-loop_NTPase"/>
</dbReference>
<dbReference type="InterPro" id="IPR000629">
    <property type="entry name" value="RNA-helicase_DEAD-box_CS"/>
</dbReference>
<dbReference type="InterPro" id="IPR014014">
    <property type="entry name" value="RNA_helicase_DEAD_Q_motif"/>
</dbReference>
<dbReference type="InterPro" id="IPR025313">
    <property type="entry name" value="SPB4-like_CTE"/>
</dbReference>
<dbReference type="PANTHER" id="PTHR24031">
    <property type="entry name" value="RNA HELICASE"/>
    <property type="match status" value="1"/>
</dbReference>
<dbReference type="Pfam" id="PF13959">
    <property type="entry name" value="CTE_SPB4"/>
    <property type="match status" value="1"/>
</dbReference>
<dbReference type="Pfam" id="PF00270">
    <property type="entry name" value="DEAD"/>
    <property type="match status" value="1"/>
</dbReference>
<dbReference type="Pfam" id="PF00271">
    <property type="entry name" value="Helicase_C"/>
    <property type="match status" value="1"/>
</dbReference>
<dbReference type="SMART" id="SM00487">
    <property type="entry name" value="DEXDc"/>
    <property type="match status" value="1"/>
</dbReference>
<dbReference type="SMART" id="SM01178">
    <property type="entry name" value="DUF4217"/>
    <property type="match status" value="1"/>
</dbReference>
<dbReference type="SMART" id="SM00490">
    <property type="entry name" value="HELICc"/>
    <property type="match status" value="1"/>
</dbReference>
<dbReference type="SUPFAM" id="SSF52540">
    <property type="entry name" value="P-loop containing nucleoside triphosphate hydrolases"/>
    <property type="match status" value="1"/>
</dbReference>
<dbReference type="PROSITE" id="PS00039">
    <property type="entry name" value="DEAD_ATP_HELICASE"/>
    <property type="match status" value="1"/>
</dbReference>
<dbReference type="PROSITE" id="PS51192">
    <property type="entry name" value="HELICASE_ATP_BIND_1"/>
    <property type="match status" value="1"/>
</dbReference>
<dbReference type="PROSITE" id="PS51194">
    <property type="entry name" value="HELICASE_CTER"/>
    <property type="match status" value="1"/>
</dbReference>
<dbReference type="PROSITE" id="PS51195">
    <property type="entry name" value="Q_MOTIF"/>
    <property type="match status" value="1"/>
</dbReference>
<gene>
    <name type="primary">has1</name>
    <name type="ORF">NFIA_103010</name>
</gene>
<keyword id="KW-0067">ATP-binding</keyword>
<keyword id="KW-0347">Helicase</keyword>
<keyword id="KW-0378">Hydrolase</keyword>
<keyword id="KW-0547">Nucleotide-binding</keyword>
<keyword id="KW-0539">Nucleus</keyword>
<keyword id="KW-1185">Reference proteome</keyword>
<keyword id="KW-0690">Ribosome biogenesis</keyword>
<keyword id="KW-0694">RNA-binding</keyword>
<keyword id="KW-0698">rRNA processing</keyword>
<comment type="function">
    <text>ATP-dependent RNA helicase involved in 40S ribosomal subunit biogenesis. Required for the processing and cleavage of 35S pre-rRNA at sites A0, A1, and A2, leading to mature 18S rRNA.</text>
</comment>
<comment type="catalytic activity">
    <reaction>
        <text>ATP + H2O = ADP + phosphate + H(+)</text>
        <dbReference type="Rhea" id="RHEA:13065"/>
        <dbReference type="ChEBI" id="CHEBI:15377"/>
        <dbReference type="ChEBI" id="CHEBI:15378"/>
        <dbReference type="ChEBI" id="CHEBI:30616"/>
        <dbReference type="ChEBI" id="CHEBI:43474"/>
        <dbReference type="ChEBI" id="CHEBI:456216"/>
        <dbReference type="EC" id="3.6.4.13"/>
    </reaction>
</comment>
<comment type="subunit">
    <text evidence="1">Associates in the nucleolus with the 60S and pre-60S ribosomal subunits.</text>
</comment>
<comment type="subcellular location">
    <subcellularLocation>
        <location evidence="1">Nucleus</location>
        <location evidence="1">Nucleolus</location>
    </subcellularLocation>
</comment>
<comment type="domain">
    <text>The Q motif is unique to and characteristic of the DEAD box family of RNA helicases and controls ATP binding and hydrolysis.</text>
</comment>
<comment type="similarity">
    <text evidence="5">Belongs to the DEAD box helicase family. DDX18/HAS1 subfamily.</text>
</comment>
<organism>
    <name type="scientific">Neosartorya fischeri (strain ATCC 1020 / DSM 3700 / CBS 544.65 / FGSC A1164 / JCM 1740 / NRRL 181 / WB 181)</name>
    <name type="common">Aspergillus fischerianus</name>
    <dbReference type="NCBI Taxonomy" id="331117"/>
    <lineage>
        <taxon>Eukaryota</taxon>
        <taxon>Fungi</taxon>
        <taxon>Dikarya</taxon>
        <taxon>Ascomycota</taxon>
        <taxon>Pezizomycotina</taxon>
        <taxon>Eurotiomycetes</taxon>
        <taxon>Eurotiomycetidae</taxon>
        <taxon>Eurotiales</taxon>
        <taxon>Aspergillaceae</taxon>
        <taxon>Aspergillus</taxon>
        <taxon>Aspergillus subgen. Fumigati</taxon>
    </lineage>
</organism>
<reference key="1">
    <citation type="journal article" date="2008" name="PLoS Genet.">
        <title>Genomic islands in the pathogenic filamentous fungus Aspergillus fumigatus.</title>
        <authorList>
            <person name="Fedorova N.D."/>
            <person name="Khaldi N."/>
            <person name="Joardar V.S."/>
            <person name="Maiti R."/>
            <person name="Amedeo P."/>
            <person name="Anderson M.J."/>
            <person name="Crabtree J."/>
            <person name="Silva J.C."/>
            <person name="Badger J.H."/>
            <person name="Albarraq A."/>
            <person name="Angiuoli S."/>
            <person name="Bussey H."/>
            <person name="Bowyer P."/>
            <person name="Cotty P.J."/>
            <person name="Dyer P.S."/>
            <person name="Egan A."/>
            <person name="Galens K."/>
            <person name="Fraser-Liggett C.M."/>
            <person name="Haas B.J."/>
            <person name="Inman J.M."/>
            <person name="Kent R."/>
            <person name="Lemieux S."/>
            <person name="Malavazi I."/>
            <person name="Orvis J."/>
            <person name="Roemer T."/>
            <person name="Ronning C.M."/>
            <person name="Sundaram J.P."/>
            <person name="Sutton G."/>
            <person name="Turner G."/>
            <person name="Venter J.C."/>
            <person name="White O.R."/>
            <person name="Whitty B.R."/>
            <person name="Youngman P."/>
            <person name="Wolfe K.H."/>
            <person name="Goldman G.H."/>
            <person name="Wortman J.R."/>
            <person name="Jiang B."/>
            <person name="Denning D.W."/>
            <person name="Nierman W.C."/>
        </authorList>
    </citation>
    <scope>NUCLEOTIDE SEQUENCE [LARGE SCALE GENOMIC DNA]</scope>
    <source>
        <strain>ATCC 1020 / DSM 3700 / CBS 544.65 / FGSC A1164 / JCM 1740 / NRRL 181 / WB 181</strain>
    </source>
</reference>
<accession>A1CW14</accession>
<protein>
    <recommendedName>
        <fullName>ATP-dependent RNA helicase has1</fullName>
        <ecNumber>3.6.4.13</ecNumber>
    </recommendedName>
</protein>